<protein>
    <recommendedName>
        <fullName evidence="10">CLIP domain-containing serine protease B4</fullName>
        <ecNumber evidence="2 8">3.4.21.-</ecNumber>
    </recommendedName>
    <alternativeName>
        <fullName evidence="10">CLIP domain-containing serine protease 14D</fullName>
        <shortName evidence="9">AgSp14D1</shortName>
    </alternativeName>
</protein>
<feature type="signal peptide" evidence="1">
    <location>
        <begin position="1"/>
        <end position="24"/>
    </location>
</feature>
<feature type="chain" id="PRO_5010132809" description="CLIP domain-containing serine protease B4" evidence="1">
    <location>
        <begin position="25"/>
        <end position="360"/>
    </location>
</feature>
<feature type="domain" description="Clip" evidence="4">
    <location>
        <begin position="30"/>
        <end position="83"/>
    </location>
</feature>
<feature type="domain" description="Peptidase S1" evidence="2">
    <location>
        <begin position="108"/>
        <end position="360"/>
    </location>
</feature>
<feature type="active site" description="Charge relay system" evidence="2">
    <location>
        <position position="153"/>
    </location>
</feature>
<feature type="active site" description="Charge relay system" evidence="2">
    <location>
        <position position="213"/>
    </location>
</feature>
<feature type="active site" description="Charge relay system" evidence="2">
    <location>
        <position position="311"/>
    </location>
</feature>
<feature type="glycosylation site" description="N-linked (GlcNAc...) asparagine" evidence="3">
    <location>
        <position position="224"/>
    </location>
</feature>
<feature type="disulfide bond" evidence="4">
    <location>
        <begin position="31"/>
        <end position="82"/>
    </location>
</feature>
<feature type="disulfide bond" evidence="4">
    <location>
        <begin position="41"/>
        <end position="72"/>
    </location>
</feature>
<feature type="disulfide bond" evidence="4">
    <location>
        <begin position="47"/>
        <end position="83"/>
    </location>
</feature>
<feature type="disulfide bond" evidence="2">
    <location>
        <begin position="138"/>
        <end position="154"/>
    </location>
</feature>
<feature type="disulfide bond" evidence="2">
    <location>
        <begin position="280"/>
        <end position="297"/>
    </location>
</feature>
<feature type="disulfide bond" evidence="2">
    <location>
        <begin position="307"/>
        <end position="336"/>
    </location>
</feature>
<feature type="sequence conflict" description="In Ref. 1; AAB62929 and 2; ACN38252." evidence="10" ref="1 2">
    <original>I</original>
    <variation>L</variation>
    <location>
        <position position="109"/>
    </location>
</feature>
<feature type="sequence conflict" description="In Ref. 1; AAB62929 and 2; ACN38252." evidence="10" ref="1 2">
    <original>S</original>
    <variation>R</variation>
    <location>
        <position position="230"/>
    </location>
</feature>
<feature type="sequence conflict" description="In Ref. 1; AAB62929 and 2; ACN38252." evidence="10" ref="1 2">
    <original>A</original>
    <variation>V</variation>
    <location>
        <position position="283"/>
    </location>
</feature>
<feature type="sequence conflict" description="In Ref. 1; AAB62929 and 2; ACN38252." evidence="10" ref="1 2">
    <original>I</original>
    <variation>V</variation>
    <location>
        <position position="301"/>
    </location>
</feature>
<feature type="sequence conflict" description="In Ref. 1; AAB62929 and 2; ACN38252." evidence="10" ref="1 2">
    <original>S</original>
    <variation>T</variation>
    <location>
        <position position="320"/>
    </location>
</feature>
<dbReference type="EC" id="3.4.21.-" evidence="2 8"/>
<dbReference type="EMBL" id="AF007166">
    <property type="protein sequence ID" value="AAB62929.1"/>
    <property type="molecule type" value="mRNA"/>
</dbReference>
<dbReference type="EMBL" id="FJ653899">
    <property type="protein sequence ID" value="ACN38252.1"/>
    <property type="molecule type" value="Genomic_DNA"/>
</dbReference>
<dbReference type="EMBL" id="AAAB01008794">
    <property type="protein sequence ID" value="EAA45573.1"/>
    <property type="molecule type" value="Genomic_DNA"/>
</dbReference>
<dbReference type="RefSeq" id="XP_307755.1">
    <property type="nucleotide sequence ID" value="XM_307755.5"/>
</dbReference>
<dbReference type="SMR" id="Q7PEV7"/>
<dbReference type="STRING" id="7165.Q7PEV7"/>
<dbReference type="MEROPS" id="S01.201"/>
<dbReference type="GlyCosmos" id="Q7PEV7">
    <property type="glycosylation" value="1 site, No reported glycans"/>
</dbReference>
<dbReference type="PaxDb" id="7165-AGAP003250-PA"/>
<dbReference type="EnsemblMetazoa" id="AGAP003250-RA">
    <property type="protein sequence ID" value="AGAP003250-PA"/>
    <property type="gene ID" value="AGAP003250"/>
</dbReference>
<dbReference type="VEuPathDB" id="VectorBase:AGAMI1_007833"/>
<dbReference type="VEuPathDB" id="VectorBase:AGAP003250"/>
<dbReference type="eggNOG" id="KOG3627">
    <property type="taxonomic scope" value="Eukaryota"/>
</dbReference>
<dbReference type="HOGENOM" id="CLU_006842_0_3_1"/>
<dbReference type="InParanoid" id="Q7PEV7"/>
<dbReference type="OMA" id="DFISPVC"/>
<dbReference type="OrthoDB" id="9028152at2759"/>
<dbReference type="PhylomeDB" id="Q7PEV7"/>
<dbReference type="Proteomes" id="UP000007062">
    <property type="component" value="Chromosome 2R"/>
</dbReference>
<dbReference type="GO" id="GO:0005615">
    <property type="term" value="C:extracellular space"/>
    <property type="evidence" value="ECO:0000318"/>
    <property type="project" value="GO_Central"/>
</dbReference>
<dbReference type="GO" id="GO:0004252">
    <property type="term" value="F:serine-type endopeptidase activity"/>
    <property type="evidence" value="ECO:0007669"/>
    <property type="project" value="InterPro"/>
</dbReference>
<dbReference type="GO" id="GO:0045087">
    <property type="term" value="P:innate immune response"/>
    <property type="evidence" value="ECO:0000318"/>
    <property type="project" value="GO_Central"/>
</dbReference>
<dbReference type="GO" id="GO:0006508">
    <property type="term" value="P:proteolysis"/>
    <property type="evidence" value="ECO:0007669"/>
    <property type="project" value="UniProtKB-KW"/>
</dbReference>
<dbReference type="CDD" id="cd00190">
    <property type="entry name" value="Tryp_SPc"/>
    <property type="match status" value="1"/>
</dbReference>
<dbReference type="FunFam" id="2.40.10.10:FF:000440">
    <property type="match status" value="1"/>
</dbReference>
<dbReference type="FunFam" id="2.40.10.10:FF:000028">
    <property type="entry name" value="Serine protease easter"/>
    <property type="match status" value="1"/>
</dbReference>
<dbReference type="Gene3D" id="3.30.1640.30">
    <property type="match status" value="1"/>
</dbReference>
<dbReference type="Gene3D" id="2.40.10.10">
    <property type="entry name" value="Trypsin-like serine proteases"/>
    <property type="match status" value="2"/>
</dbReference>
<dbReference type="InterPro" id="IPR022700">
    <property type="entry name" value="CLIP"/>
</dbReference>
<dbReference type="InterPro" id="IPR038565">
    <property type="entry name" value="CLIP_sf"/>
</dbReference>
<dbReference type="InterPro" id="IPR009003">
    <property type="entry name" value="Peptidase_S1_PA"/>
</dbReference>
<dbReference type="InterPro" id="IPR043504">
    <property type="entry name" value="Peptidase_S1_PA_chymotrypsin"/>
</dbReference>
<dbReference type="InterPro" id="IPR001314">
    <property type="entry name" value="Peptidase_S1A"/>
</dbReference>
<dbReference type="InterPro" id="IPR051487">
    <property type="entry name" value="Ser/Thr_Proteases_Immune/Dev"/>
</dbReference>
<dbReference type="InterPro" id="IPR001254">
    <property type="entry name" value="Trypsin_dom"/>
</dbReference>
<dbReference type="InterPro" id="IPR018114">
    <property type="entry name" value="TRYPSIN_HIS"/>
</dbReference>
<dbReference type="InterPro" id="IPR033116">
    <property type="entry name" value="TRYPSIN_SER"/>
</dbReference>
<dbReference type="PANTHER" id="PTHR24256">
    <property type="entry name" value="TRYPTASE-RELATED"/>
    <property type="match status" value="1"/>
</dbReference>
<dbReference type="Pfam" id="PF12032">
    <property type="entry name" value="CLIP"/>
    <property type="match status" value="1"/>
</dbReference>
<dbReference type="Pfam" id="PF00089">
    <property type="entry name" value="Trypsin"/>
    <property type="match status" value="1"/>
</dbReference>
<dbReference type="PRINTS" id="PR00722">
    <property type="entry name" value="CHYMOTRYPSIN"/>
</dbReference>
<dbReference type="SMART" id="SM00680">
    <property type="entry name" value="CLIP"/>
    <property type="match status" value="1"/>
</dbReference>
<dbReference type="SMART" id="SM00020">
    <property type="entry name" value="Tryp_SPc"/>
    <property type="match status" value="1"/>
</dbReference>
<dbReference type="SUPFAM" id="SSF50494">
    <property type="entry name" value="Trypsin-like serine proteases"/>
    <property type="match status" value="1"/>
</dbReference>
<dbReference type="PROSITE" id="PS51888">
    <property type="entry name" value="CLIP"/>
    <property type="match status" value="1"/>
</dbReference>
<dbReference type="PROSITE" id="PS50240">
    <property type="entry name" value="TRYPSIN_DOM"/>
    <property type="match status" value="1"/>
</dbReference>
<dbReference type="PROSITE" id="PS00134">
    <property type="entry name" value="TRYPSIN_HIS"/>
    <property type="match status" value="1"/>
</dbReference>
<dbReference type="PROSITE" id="PS00135">
    <property type="entry name" value="TRYPSIN_SER"/>
    <property type="match status" value="1"/>
</dbReference>
<gene>
    <name evidence="13" type="primary">CLIPB4</name>
    <name evidence="9" type="synonym">SP14D1</name>
    <name evidence="13" type="ORF">AGAP003250</name>
</gene>
<organism evidence="14">
    <name type="scientific">Anopheles gambiae</name>
    <name type="common">African malaria mosquito</name>
    <dbReference type="NCBI Taxonomy" id="7165"/>
    <lineage>
        <taxon>Eukaryota</taxon>
        <taxon>Metazoa</taxon>
        <taxon>Ecdysozoa</taxon>
        <taxon>Arthropoda</taxon>
        <taxon>Hexapoda</taxon>
        <taxon>Insecta</taxon>
        <taxon>Pterygota</taxon>
        <taxon>Neoptera</taxon>
        <taxon>Endopterygota</taxon>
        <taxon>Diptera</taxon>
        <taxon>Nematocera</taxon>
        <taxon>Culicoidea</taxon>
        <taxon>Culicidae</taxon>
        <taxon>Anophelinae</taxon>
        <taxon>Anopheles</taxon>
    </lineage>
</organism>
<comment type="function">
    <text evidence="7 8">Serine protease which plays a role in the innate immune response against protozoan and bacterial pathogens, such as Plasmodium bergei, Staphylococcus aureus, Micrococcus luteus and Escherichia coli, by activating the melanization cascade (PubMed:16922859, PubMed:37703846). Cleaves and activates CLIPB8 (PubMed:37703846). In the resistant strain L3-5, involved in the melanization of killed parasite P.berghei ookinetes which results in their clearance (PubMed:16922859). In the susceptible strain G3, appears to be dispensable for ookinete elimination which occurs by lysis (PubMed:16922859).</text>
</comment>
<comment type="subunit">
    <text evidence="8">Interacts with SRPN2 in the hemolymph of immune-challenged female mosquitoes; the interaction results in CLIPB4 inhibition.</text>
</comment>
<comment type="subcellular location">
    <subcellularLocation>
        <location evidence="10">Secreted</location>
    </subcellularLocation>
</comment>
<comment type="tissue specificity">
    <text evidence="5">In females, expressed in fat body, cuticle, thorax and ovaries.</text>
</comment>
<comment type="developmental stage">
    <text evidence="5">Expressed in eggs, larvae, pupae, and male and female adults.</text>
</comment>
<comment type="induction">
    <text evidence="5 6 7">Induced following a blood meal (PubMed:10469250). Induced in response to bacterial infection (PubMed:10469250, PubMed:10646969). Induced in response to P.berghei infection (PubMed:10646969, PubMed:16922859).</text>
</comment>
<comment type="domain">
    <text evidence="4">The clip domain consists of 35-55 residues which are 'knitted' together usually by 3 conserved disulfide bonds forming a clip-like compact structure.</text>
</comment>
<comment type="disruption phenotype">
    <text evidence="7 8">RNAi-mediated knockdown in the resistant strain L3-5 infected with P.berghei, causes a 5-fold reduction in the number of melanized ookinetes (PubMed:16922859). Simultaneous RNAi-mediated knockdown of CLIPB4 and CLIPB17 in the resistant strain L3-5 infected with P.berghei, causes a 52-fold reduction in the number of melanized ookinetes (PubMed:16922859). RNAi-mediated knockdown in the susceptible strain G3 infected with P.berghei has no effect on the response to parasite infection (PubMed:16922859). Simultaneous RNAi-mediated knockdown of CLIPB4 and CTL4 in the susceptible strain G3 infected with P.berghei, abolishes ookinete increased melanization caused by RNAi-mediated knockdown of CTL4 (PubMed:16922859). Simultaneous RNAi-mediated knockdown of CLIPB4 and SRPN2 results in increased survival and reduced spontaneous melanization compared to a single SRPN2 knockdown (PubMed:37703846). RNAi-mediated knockdown results in reduced melanization after microbial challenge (PubMed:37703846). RNAi-mediated knockdown rescues infection-induced depletion of CLIPB8 after microbial challenge (PubMed:37703846). No significant effects on lifespan (PubMed:37703846).</text>
</comment>
<comment type="similarity">
    <text evidence="4">Belongs to the peptidase S1 family. CLIP subfamily.</text>
</comment>
<sequence length="360" mass="39382">MIGNRVINLLIVATLALAGQTVLALELGQDCVNPVGEAGKCVLFRECQPLVDIYNKPVNTPDDTQFLTESRCGLYERKTLVCCAGVRSKGKTSLPESPNCGVQLTDRVIGGQPTKIDEFPWTALIEYEKPNGRFGFHCGGSVINERYILTAAHCITSIPRGWKVHRVRLGEWDLSSTTDQEDDFYADAPIDLDIEKIIVHPGYNLQDKSHHNDIALIRFNREINYSSTISAICLPLSNSLRNRKHAGLSSYAAGWGKTETASASQKKLKVELTVVDVKDCSPAYQRNGISLDSTQMCAGGIRGKDTCSGDSGGPLMRQMSGSWYLIGVVSFGPQKCGAPGVPGVYTNVAEYVDWIKDNIY</sequence>
<accession>Q7PEV7</accession>
<accession>O17489</accession>
<reference evidence="11" key="1">
    <citation type="journal article" date="1999" name="Insect Mol. Biol.">
        <title>An easter-like serine protease from Anopheles gambiae exhibits changes in transcript abundance following immune challenge.</title>
        <authorList>
            <person name="Paskewitz S.M."/>
            <person name="Reese-Stardy S."/>
            <person name="Gorman M.J."/>
        </authorList>
    </citation>
    <scope>NUCLEOTIDE SEQUENCE [MRNA]</scope>
    <scope>TISSUE SPECIFICITY</scope>
    <scope>DEVELOPMENTAL STAGE</scope>
    <scope>INDUCTION</scope>
</reference>
<reference evidence="12" key="2">
    <citation type="journal article" date="2009" name="PLoS ONE">
        <title>Molecular evolution of immune genes in the malaria mosquito Anopheles gambiae.</title>
        <authorList>
            <person name="Lehmann T."/>
            <person name="Hume J.C."/>
            <person name="Licht M."/>
            <person name="Burns C.S."/>
            <person name="Wollenberg K."/>
            <person name="Simard F."/>
            <person name="Ribeiro J.M."/>
        </authorList>
    </citation>
    <scope>NUCLEOTIDE SEQUENCE [GENOMIC DNA]</scope>
    <source>
        <strain evidence="12">GS16359</strain>
    </source>
</reference>
<reference evidence="14" key="3">
    <citation type="journal article" date="2002" name="Science">
        <title>The genome sequence of the malaria mosquito Anopheles gambiae.</title>
        <authorList>
            <person name="Holt R.A."/>
            <person name="Subramanian G.M."/>
            <person name="Halpern A."/>
            <person name="Sutton G.G."/>
            <person name="Charlab R."/>
            <person name="Nusskern D.R."/>
            <person name="Wincker P."/>
            <person name="Clark A.G."/>
            <person name="Ribeiro J.M.C."/>
            <person name="Wides R."/>
            <person name="Salzberg S.L."/>
            <person name="Loftus B.J."/>
            <person name="Yandell M.D."/>
            <person name="Majoros W.H."/>
            <person name="Rusch D.B."/>
            <person name="Lai Z."/>
            <person name="Kraft C.L."/>
            <person name="Abril J.F."/>
            <person name="Anthouard V."/>
            <person name="Arensburger P."/>
            <person name="Atkinson P.W."/>
            <person name="Baden H."/>
            <person name="de Berardinis V."/>
            <person name="Baldwin D."/>
            <person name="Benes V."/>
            <person name="Biedler J."/>
            <person name="Blass C."/>
            <person name="Bolanos R."/>
            <person name="Boscus D."/>
            <person name="Barnstead M."/>
            <person name="Cai S."/>
            <person name="Center A."/>
            <person name="Chaturverdi K."/>
            <person name="Christophides G.K."/>
            <person name="Chrystal M.A.M."/>
            <person name="Clamp M."/>
            <person name="Cravchik A."/>
            <person name="Curwen V."/>
            <person name="Dana A."/>
            <person name="Delcher A."/>
            <person name="Dew I."/>
            <person name="Evans C.A."/>
            <person name="Flanigan M."/>
            <person name="Grundschober-Freimoser A."/>
            <person name="Friedli L."/>
            <person name="Gu Z."/>
            <person name="Guan P."/>
            <person name="Guigo R."/>
            <person name="Hillenmeyer M.E."/>
            <person name="Hladun S.L."/>
            <person name="Hogan J.R."/>
            <person name="Hong Y.S."/>
            <person name="Hoover J."/>
            <person name="Jaillon O."/>
            <person name="Ke Z."/>
            <person name="Kodira C.D."/>
            <person name="Kokoza E."/>
            <person name="Koutsos A."/>
            <person name="Letunic I."/>
            <person name="Levitsky A.A."/>
            <person name="Liang Y."/>
            <person name="Lin J.-J."/>
            <person name="Lobo N.F."/>
            <person name="Lopez J.R."/>
            <person name="Malek J.A."/>
            <person name="McIntosh T.C."/>
            <person name="Meister S."/>
            <person name="Miller J.R."/>
            <person name="Mobarry C."/>
            <person name="Mongin E."/>
            <person name="Murphy S.D."/>
            <person name="O'Brochta D.A."/>
            <person name="Pfannkoch C."/>
            <person name="Qi R."/>
            <person name="Regier M.A."/>
            <person name="Remington K."/>
            <person name="Shao H."/>
            <person name="Sharakhova M.V."/>
            <person name="Sitter C.D."/>
            <person name="Shetty J."/>
            <person name="Smith T.J."/>
            <person name="Strong R."/>
            <person name="Sun J."/>
            <person name="Thomasova D."/>
            <person name="Ton L.Q."/>
            <person name="Topalis P."/>
            <person name="Tu Z.J."/>
            <person name="Unger M.F."/>
            <person name="Walenz B."/>
            <person name="Wang A.H."/>
            <person name="Wang J."/>
            <person name="Wang M."/>
            <person name="Wang X."/>
            <person name="Woodford K.J."/>
            <person name="Wortman J.R."/>
            <person name="Wu M."/>
            <person name="Yao A."/>
            <person name="Zdobnov E.M."/>
            <person name="Zhang H."/>
            <person name="Zhao Q."/>
            <person name="Zhao S."/>
            <person name="Zhu S.C."/>
            <person name="Zhimulev I."/>
            <person name="Coluzzi M."/>
            <person name="della Torre A."/>
            <person name="Roth C.W."/>
            <person name="Louis C."/>
            <person name="Kalush F."/>
            <person name="Mural R.J."/>
            <person name="Myers E.W."/>
            <person name="Adams M.D."/>
            <person name="Smith H.O."/>
            <person name="Broder S."/>
            <person name="Gardner M.J."/>
            <person name="Fraser C.M."/>
            <person name="Birney E."/>
            <person name="Bork P."/>
            <person name="Brey P.T."/>
            <person name="Venter J.C."/>
            <person name="Weissenbach J."/>
            <person name="Kafatos F.C."/>
            <person name="Collins F.H."/>
            <person name="Hoffman S.L."/>
        </authorList>
    </citation>
    <scope>NUCLEOTIDE SEQUENCE [LARGE SCALE GENOMIC DNA]</scope>
    <source>
        <strain evidence="14">PEST</strain>
    </source>
</reference>
<reference key="4">
    <citation type="journal article" date="2006" name="Cell. Microbiol.">
        <title>A genetic module regulates the melanization response of Anopheles to Plasmodium.</title>
        <authorList>
            <person name="Volz J."/>
            <person name="Mueller H.M."/>
            <person name="Zdanowicz A."/>
            <person name="Kafatos F.C."/>
            <person name="Osta M.A."/>
        </authorList>
    </citation>
    <scope>FUNCTION</scope>
    <scope>INDUCTION</scope>
    <scope>DISRUPTION PHENOTYPE</scope>
    <source>
        <strain evidence="7">G3</strain>
        <strain evidence="7">L3-5</strain>
    </source>
</reference>
<reference evidence="10" key="5">
    <citation type="journal article" date="2000" name="Insect Biochem. Mol. Biol.">
        <title>Molecular characterization of five serine protease genes cloned from Anopheles gambiae hemolymph.</title>
        <authorList>
            <person name="Gorman M.J."/>
            <person name="Andreeva O.V."/>
            <person name="Paskewitz S.M."/>
        </authorList>
    </citation>
    <scope>INDUCTION</scope>
</reference>
<reference key="6">
    <citation type="journal article" date="2023" name="J. Innate Immun.">
        <title>CLIPB4 Is a Central Node in the Protease Network that Regulates Humoral Immunity in Anopheles gambiae Mosquitoes.</title>
        <authorList>
            <person name="Zhang X."/>
            <person name="Zhang S."/>
            <person name="Kuang J."/>
            <person name="Sellens K.A."/>
            <person name="Morejon B."/>
            <person name="Saab S.A."/>
            <person name="Li M."/>
            <person name="Metto E.C."/>
            <person name="An C."/>
            <person name="Culbertson C.T."/>
            <person name="Osta M.A."/>
            <person name="Scoglio C."/>
            <person name="Michel K."/>
        </authorList>
    </citation>
    <scope>FUNCTION</scope>
    <scope>CATALYTIC ACTIVITY</scope>
    <scope>INTERACTION WITH SRPN2</scope>
    <scope>DISRUPTION PHENOTYPE</scope>
</reference>
<name>CLB4_ANOGA</name>
<proteinExistence type="evidence at protein level"/>
<evidence type="ECO:0000255" key="1"/>
<evidence type="ECO:0000255" key="2">
    <source>
        <dbReference type="PROSITE-ProRule" id="PRU00274"/>
    </source>
</evidence>
<evidence type="ECO:0000255" key="3">
    <source>
        <dbReference type="PROSITE-ProRule" id="PRU00498"/>
    </source>
</evidence>
<evidence type="ECO:0000255" key="4">
    <source>
        <dbReference type="PROSITE-ProRule" id="PRU01236"/>
    </source>
</evidence>
<evidence type="ECO:0000269" key="5">
    <source>
    </source>
</evidence>
<evidence type="ECO:0000269" key="6">
    <source>
    </source>
</evidence>
<evidence type="ECO:0000269" key="7">
    <source>
    </source>
</evidence>
<evidence type="ECO:0000269" key="8">
    <source>
    </source>
</evidence>
<evidence type="ECO:0000303" key="9">
    <source>
    </source>
</evidence>
<evidence type="ECO:0000305" key="10"/>
<evidence type="ECO:0000312" key="11">
    <source>
        <dbReference type="EMBL" id="AAB62929.1"/>
    </source>
</evidence>
<evidence type="ECO:0000312" key="12">
    <source>
        <dbReference type="EMBL" id="ACN38252.1"/>
    </source>
</evidence>
<evidence type="ECO:0000312" key="13">
    <source>
        <dbReference type="EMBL" id="EAA45573.1"/>
    </source>
</evidence>
<evidence type="ECO:0000312" key="14">
    <source>
        <dbReference type="Proteomes" id="UP000007062"/>
    </source>
</evidence>
<keyword id="KW-1015">Disulfide bond</keyword>
<keyword id="KW-0325">Glycoprotein</keyword>
<keyword id="KW-0378">Hydrolase</keyword>
<keyword id="KW-0391">Immunity</keyword>
<keyword id="KW-0399">Innate immunity</keyword>
<keyword id="KW-0645">Protease</keyword>
<keyword id="KW-1185">Reference proteome</keyword>
<keyword id="KW-0964">Secreted</keyword>
<keyword id="KW-0720">Serine protease</keyword>
<keyword id="KW-0732">Signal</keyword>